<name>RPOB_BURMS</name>
<accession>A1V8B2</accession>
<dbReference type="EC" id="2.7.7.6" evidence="1"/>
<dbReference type="EMBL" id="CP000526">
    <property type="protein sequence ID" value="ABM51784.1"/>
    <property type="molecule type" value="Genomic_DNA"/>
</dbReference>
<dbReference type="RefSeq" id="WP_004206241.1">
    <property type="nucleotide sequence ID" value="NC_008785.1"/>
</dbReference>
<dbReference type="SMR" id="A1V8B2"/>
<dbReference type="KEGG" id="bmv:BMASAVP1_A3178"/>
<dbReference type="HOGENOM" id="CLU_000524_4_3_4"/>
<dbReference type="GO" id="GO:0000428">
    <property type="term" value="C:DNA-directed RNA polymerase complex"/>
    <property type="evidence" value="ECO:0007669"/>
    <property type="project" value="UniProtKB-KW"/>
</dbReference>
<dbReference type="GO" id="GO:0003677">
    <property type="term" value="F:DNA binding"/>
    <property type="evidence" value="ECO:0007669"/>
    <property type="project" value="UniProtKB-UniRule"/>
</dbReference>
<dbReference type="GO" id="GO:0003899">
    <property type="term" value="F:DNA-directed RNA polymerase activity"/>
    <property type="evidence" value="ECO:0007669"/>
    <property type="project" value="UniProtKB-UniRule"/>
</dbReference>
<dbReference type="GO" id="GO:0032549">
    <property type="term" value="F:ribonucleoside binding"/>
    <property type="evidence" value="ECO:0007669"/>
    <property type="project" value="InterPro"/>
</dbReference>
<dbReference type="GO" id="GO:0006351">
    <property type="term" value="P:DNA-templated transcription"/>
    <property type="evidence" value="ECO:0007669"/>
    <property type="project" value="UniProtKB-UniRule"/>
</dbReference>
<dbReference type="CDD" id="cd00653">
    <property type="entry name" value="RNA_pol_B_RPB2"/>
    <property type="match status" value="1"/>
</dbReference>
<dbReference type="FunFam" id="2.40.50.100:FF:000006">
    <property type="entry name" value="DNA-directed RNA polymerase subunit beta"/>
    <property type="match status" value="1"/>
</dbReference>
<dbReference type="FunFam" id="2.40.50.150:FF:000001">
    <property type="entry name" value="DNA-directed RNA polymerase subunit beta"/>
    <property type="match status" value="1"/>
</dbReference>
<dbReference type="FunFam" id="3.90.1110.10:FF:000004">
    <property type="entry name" value="DNA-directed RNA polymerase subunit beta"/>
    <property type="match status" value="1"/>
</dbReference>
<dbReference type="FunFam" id="3.90.1800.10:FF:000001">
    <property type="entry name" value="DNA-directed RNA polymerase subunit beta"/>
    <property type="match status" value="1"/>
</dbReference>
<dbReference type="Gene3D" id="2.40.50.100">
    <property type="match status" value="1"/>
</dbReference>
<dbReference type="Gene3D" id="2.40.50.150">
    <property type="match status" value="1"/>
</dbReference>
<dbReference type="Gene3D" id="3.90.1100.10">
    <property type="match status" value="2"/>
</dbReference>
<dbReference type="Gene3D" id="2.30.150.10">
    <property type="entry name" value="DNA-directed RNA polymerase, beta subunit, external 1 domain"/>
    <property type="match status" value="1"/>
</dbReference>
<dbReference type="Gene3D" id="2.40.270.10">
    <property type="entry name" value="DNA-directed RNA polymerase, subunit 2, domain 6"/>
    <property type="match status" value="2"/>
</dbReference>
<dbReference type="Gene3D" id="3.90.1800.10">
    <property type="entry name" value="RNA polymerase alpha subunit dimerisation domain"/>
    <property type="match status" value="1"/>
</dbReference>
<dbReference type="Gene3D" id="3.90.1110.10">
    <property type="entry name" value="RNA polymerase Rpb2, domain 2"/>
    <property type="match status" value="2"/>
</dbReference>
<dbReference type="HAMAP" id="MF_01321">
    <property type="entry name" value="RNApol_bact_RpoB"/>
    <property type="match status" value="1"/>
</dbReference>
<dbReference type="InterPro" id="IPR042107">
    <property type="entry name" value="DNA-dir_RNA_pol_bsu_ext_1_sf"/>
</dbReference>
<dbReference type="InterPro" id="IPR019462">
    <property type="entry name" value="DNA-dir_RNA_pol_bsu_external_1"/>
</dbReference>
<dbReference type="InterPro" id="IPR015712">
    <property type="entry name" value="DNA-dir_RNA_pol_su2"/>
</dbReference>
<dbReference type="InterPro" id="IPR007120">
    <property type="entry name" value="DNA-dir_RNAP_su2_dom"/>
</dbReference>
<dbReference type="InterPro" id="IPR037033">
    <property type="entry name" value="DNA-dir_RNAP_su2_hyb_sf"/>
</dbReference>
<dbReference type="InterPro" id="IPR010243">
    <property type="entry name" value="RNA_pol_bsu_bac"/>
</dbReference>
<dbReference type="InterPro" id="IPR007121">
    <property type="entry name" value="RNA_pol_bsu_CS"/>
</dbReference>
<dbReference type="InterPro" id="IPR007644">
    <property type="entry name" value="RNA_pol_bsu_protrusion"/>
</dbReference>
<dbReference type="InterPro" id="IPR007642">
    <property type="entry name" value="RNA_pol_Rpb2_2"/>
</dbReference>
<dbReference type="InterPro" id="IPR037034">
    <property type="entry name" value="RNA_pol_Rpb2_2_sf"/>
</dbReference>
<dbReference type="InterPro" id="IPR007645">
    <property type="entry name" value="RNA_pol_Rpb2_3"/>
</dbReference>
<dbReference type="InterPro" id="IPR007641">
    <property type="entry name" value="RNA_pol_Rpb2_7"/>
</dbReference>
<dbReference type="InterPro" id="IPR014724">
    <property type="entry name" value="RNA_pol_RPB2_OB-fold"/>
</dbReference>
<dbReference type="NCBIfam" id="NF001616">
    <property type="entry name" value="PRK00405.1"/>
    <property type="match status" value="1"/>
</dbReference>
<dbReference type="NCBIfam" id="TIGR02013">
    <property type="entry name" value="rpoB"/>
    <property type="match status" value="1"/>
</dbReference>
<dbReference type="PANTHER" id="PTHR20856">
    <property type="entry name" value="DNA-DIRECTED RNA POLYMERASE I SUBUNIT 2"/>
    <property type="match status" value="1"/>
</dbReference>
<dbReference type="Pfam" id="PF04563">
    <property type="entry name" value="RNA_pol_Rpb2_1"/>
    <property type="match status" value="1"/>
</dbReference>
<dbReference type="Pfam" id="PF04561">
    <property type="entry name" value="RNA_pol_Rpb2_2"/>
    <property type="match status" value="2"/>
</dbReference>
<dbReference type="Pfam" id="PF04565">
    <property type="entry name" value="RNA_pol_Rpb2_3"/>
    <property type="match status" value="1"/>
</dbReference>
<dbReference type="Pfam" id="PF10385">
    <property type="entry name" value="RNA_pol_Rpb2_45"/>
    <property type="match status" value="1"/>
</dbReference>
<dbReference type="Pfam" id="PF00562">
    <property type="entry name" value="RNA_pol_Rpb2_6"/>
    <property type="match status" value="1"/>
</dbReference>
<dbReference type="Pfam" id="PF04560">
    <property type="entry name" value="RNA_pol_Rpb2_7"/>
    <property type="match status" value="1"/>
</dbReference>
<dbReference type="SUPFAM" id="SSF64484">
    <property type="entry name" value="beta and beta-prime subunits of DNA dependent RNA-polymerase"/>
    <property type="match status" value="1"/>
</dbReference>
<dbReference type="PROSITE" id="PS01166">
    <property type="entry name" value="RNA_POL_BETA"/>
    <property type="match status" value="1"/>
</dbReference>
<feature type="chain" id="PRO_1000051964" description="DNA-directed RNA polymerase subunit beta">
    <location>
        <begin position="1"/>
        <end position="1368"/>
    </location>
</feature>
<comment type="function">
    <text evidence="1">DNA-dependent RNA polymerase catalyzes the transcription of DNA into RNA using the four ribonucleoside triphosphates as substrates.</text>
</comment>
<comment type="catalytic activity">
    <reaction evidence="1">
        <text>RNA(n) + a ribonucleoside 5'-triphosphate = RNA(n+1) + diphosphate</text>
        <dbReference type="Rhea" id="RHEA:21248"/>
        <dbReference type="Rhea" id="RHEA-COMP:14527"/>
        <dbReference type="Rhea" id="RHEA-COMP:17342"/>
        <dbReference type="ChEBI" id="CHEBI:33019"/>
        <dbReference type="ChEBI" id="CHEBI:61557"/>
        <dbReference type="ChEBI" id="CHEBI:140395"/>
        <dbReference type="EC" id="2.7.7.6"/>
    </reaction>
</comment>
<comment type="subunit">
    <text evidence="1">The RNAP catalytic core consists of 2 alpha, 1 beta, 1 beta' and 1 omega subunit. When a sigma factor is associated with the core the holoenzyme is formed, which can initiate transcription.</text>
</comment>
<comment type="similarity">
    <text evidence="1">Belongs to the RNA polymerase beta chain family.</text>
</comment>
<reference key="1">
    <citation type="journal article" date="2010" name="Genome Biol. Evol.">
        <title>Continuing evolution of Burkholderia mallei through genome reduction and large-scale rearrangements.</title>
        <authorList>
            <person name="Losada L."/>
            <person name="Ronning C.M."/>
            <person name="DeShazer D."/>
            <person name="Woods D."/>
            <person name="Fedorova N."/>
            <person name="Kim H.S."/>
            <person name="Shabalina S.A."/>
            <person name="Pearson T.R."/>
            <person name="Brinkac L."/>
            <person name="Tan P."/>
            <person name="Nandi T."/>
            <person name="Crabtree J."/>
            <person name="Badger J."/>
            <person name="Beckstrom-Sternberg S."/>
            <person name="Saqib M."/>
            <person name="Schutzer S.E."/>
            <person name="Keim P."/>
            <person name="Nierman W.C."/>
        </authorList>
    </citation>
    <scope>NUCLEOTIDE SEQUENCE [LARGE SCALE GENOMIC DNA]</scope>
    <source>
        <strain>SAVP1</strain>
    </source>
</reference>
<proteinExistence type="inferred from homology"/>
<keyword id="KW-0240">DNA-directed RNA polymerase</keyword>
<keyword id="KW-0548">Nucleotidyltransferase</keyword>
<keyword id="KW-0804">Transcription</keyword>
<keyword id="KW-0808">Transferase</keyword>
<gene>
    <name evidence="1" type="primary">rpoB</name>
    <name type="ordered locus">BMASAVP1_A3178</name>
</gene>
<evidence type="ECO:0000255" key="1">
    <source>
        <dbReference type="HAMAP-Rule" id="MF_01321"/>
    </source>
</evidence>
<protein>
    <recommendedName>
        <fullName evidence="1">DNA-directed RNA polymerase subunit beta</fullName>
        <shortName evidence="1">RNAP subunit beta</shortName>
        <ecNumber evidence="1">2.7.7.6</ecNumber>
    </recommendedName>
    <alternativeName>
        <fullName evidence="1">RNA polymerase subunit beta</fullName>
    </alternativeName>
    <alternativeName>
        <fullName evidence="1">Transcriptase subunit beta</fullName>
    </alternativeName>
</protein>
<sequence>MQYSFTEKKRIRKSFAKRSIVHQVPFLLATQLESFSTFLQADVPTAQRKSEGLQAAFTSVFPIVSHNGFARLEFVSYALSSPAFNIKECQQRGLTYCSALRAKVRLVLLDKESPSKSVVKEVKEQEVYMGEIPLMTPTGSFVINGTERVIVSQLHRSPGVFFEHDKGKTHSSGKLLFSARIIPYRGSWLDFEFDPKDVLYFRVDRRRKMPVTILLKAIGLTPEQILANFFVFDNFTLMDEGAQMEFVPERLRGEVARFDITDREGKVIVQKDKRINAKHIRDLEAAKTKYISVPEDYLLGRVLAKNVVDGDTGEVIANANDEITEGVLEKLREAKIKEIQTLYTNDLDQGPYISSTLRVDETVDKTAARIAIYRMMRPGEPPTEEAVEALFNRLFYSEDAYDLSKVGRMKFNRRVGRDEITGPMTLQDDDILATIKILVELRNGKGEVDDIDHLGNRRVRCVGELAENQFRAGLVRVERAVKERLGQAESENLMPHDLINSKPISSAIREFFGSSQLSQFMDQTNPLSEITHKRRVSALGPGGLTRERAGFEVRDVHPTHYGRVCPIETPEGPNIGLINSLALYAHLNEYGFLETPYRKVVDSKVTDQIDYLSAIEEGRYMIAQANAAIGDDGALVDELVSSREAGETMMVTPDRIQYMDVAPSQIVSVAASLIPFLEHDDANRALMGSNMQRQAVPCLRPEKPVVGTGIERTVAVDSGTTVQALRGGVVDYVDAGRIVIRVNDDEAVAGEVGVDIYNLIKYTRSNQNTNINQRPIVKMGDKVSRGDVLADGASTDLGELALGQNMLIAFMPWNGYNFEDSILISERVVADDRYTSIHIEELNVVARDTKLGPEEITRDISNLAEVQLGRLDESGIVYIGAEVEAGDVLVGKVTPKGETQLTPEEKLLRAIFGEKASDVKDTSLRVPSGMSGTVIDVQVFTREGIQRDKRAQQIIDDELKRYRLDLNDQLRIVEGDAFQRLARMLVGKVANGGPKKLAKGTKIDQAYLEDLDHYHWFDIRLADDEAAVQLEAIKNSIEEKRHQFDLAFEEKRKKLTQGDELPPGVLKMVKVYLAVKRRLQPGDKMAGRHGNKGVVSKIVPVEDMPYMADGRPADVVLNPLGVPSRMNVGQVLEVHLGWAAKGLGWRIGEMLARQTKIEELRVFLTKIYNESGRAEDLESFSDDEILELAKNLREGVPFATPVFDGATEEEMSKMLDLAFPDDIAEQLDMNPSKNQVRLYDGRTGEPFERRVTVGYMHYLKLHHLVDDKMHARSTGPYSLVTQQPLGGKAQFGGQRFGEMEVWALEAYGASYVLQEMLTVKSDDVTGRTKVYENLVKGDHVIDAGMPESFNVLVKEIRSLGIDIDLDRN</sequence>
<organism>
    <name type="scientific">Burkholderia mallei (strain SAVP1)</name>
    <dbReference type="NCBI Taxonomy" id="320388"/>
    <lineage>
        <taxon>Bacteria</taxon>
        <taxon>Pseudomonadati</taxon>
        <taxon>Pseudomonadota</taxon>
        <taxon>Betaproteobacteria</taxon>
        <taxon>Burkholderiales</taxon>
        <taxon>Burkholderiaceae</taxon>
        <taxon>Burkholderia</taxon>
        <taxon>pseudomallei group</taxon>
    </lineage>
</organism>